<name>RS12_DESAL</name>
<keyword id="KW-0488">Methylation</keyword>
<keyword id="KW-1185">Reference proteome</keyword>
<keyword id="KW-0687">Ribonucleoprotein</keyword>
<keyword id="KW-0689">Ribosomal protein</keyword>
<keyword id="KW-0694">RNA-binding</keyword>
<keyword id="KW-0699">rRNA-binding</keyword>
<keyword id="KW-0820">tRNA-binding</keyword>
<comment type="function">
    <text evidence="2">With S4 and S5 plays an important role in translational accuracy.</text>
</comment>
<comment type="function">
    <text evidence="2">Interacts with and stabilizes bases of the 16S rRNA that are involved in tRNA selection in the A site and with the mRNA backbone. Located at the interface of the 30S and 50S subunits, it traverses the body of the 30S subunit contacting proteins on the other side and probably holding the rRNA structure together. The combined cluster of proteins S8, S12 and S17 appears to hold together the shoulder and platform of the 30S subunit.</text>
</comment>
<comment type="subunit">
    <text evidence="2">Part of the 30S ribosomal subunit. Contacts proteins S8 and S17. May interact with IF1 in the 30S initiation complex.</text>
</comment>
<comment type="similarity">
    <text evidence="2">Belongs to the universal ribosomal protein uS12 family.</text>
</comment>
<feature type="chain" id="PRO_1000194153" description="Small ribosomal subunit protein uS12">
    <location>
        <begin position="1"/>
        <end position="123"/>
    </location>
</feature>
<feature type="region of interest" description="Disordered" evidence="3">
    <location>
        <begin position="1"/>
        <end position="32"/>
    </location>
</feature>
<feature type="modified residue" description="3-methylthioaspartic acid" evidence="1">
    <location>
        <position position="89"/>
    </location>
</feature>
<protein>
    <recommendedName>
        <fullName evidence="2">Small ribosomal subunit protein uS12</fullName>
    </recommendedName>
    <alternativeName>
        <fullName evidence="4">30S ribosomal protein S12</fullName>
    </alternativeName>
</protein>
<proteinExistence type="inferred from homology"/>
<evidence type="ECO:0000250" key="1"/>
<evidence type="ECO:0000255" key="2">
    <source>
        <dbReference type="HAMAP-Rule" id="MF_00403"/>
    </source>
</evidence>
<evidence type="ECO:0000256" key="3">
    <source>
        <dbReference type="SAM" id="MobiDB-lite"/>
    </source>
</evidence>
<evidence type="ECO:0000305" key="4"/>
<organism>
    <name type="scientific">Desulfatibacillum aliphaticivorans</name>
    <dbReference type="NCBI Taxonomy" id="218208"/>
    <lineage>
        <taxon>Bacteria</taxon>
        <taxon>Pseudomonadati</taxon>
        <taxon>Thermodesulfobacteriota</taxon>
        <taxon>Desulfobacteria</taxon>
        <taxon>Desulfobacterales</taxon>
        <taxon>Desulfatibacillaceae</taxon>
        <taxon>Desulfatibacillum</taxon>
    </lineage>
</organism>
<reference key="1">
    <citation type="journal article" date="2012" name="Environ. Microbiol.">
        <title>The genome sequence of Desulfatibacillum alkenivorans AK-01: a blueprint for anaerobic alkane oxidation.</title>
        <authorList>
            <person name="Callaghan A.V."/>
            <person name="Morris B.E."/>
            <person name="Pereira I.A."/>
            <person name="McInerney M.J."/>
            <person name="Austin R.N."/>
            <person name="Groves J.T."/>
            <person name="Kukor J.J."/>
            <person name="Suflita J.M."/>
            <person name="Young L.Y."/>
            <person name="Zylstra G.J."/>
            <person name="Wawrik B."/>
        </authorList>
    </citation>
    <scope>NUCLEOTIDE SEQUENCE [LARGE SCALE GENOMIC DNA]</scope>
    <source>
        <strain>AK-01</strain>
    </source>
</reference>
<dbReference type="EMBL" id="CP001322">
    <property type="protein sequence ID" value="ACL03616.1"/>
    <property type="molecule type" value="Genomic_DNA"/>
</dbReference>
<dbReference type="RefSeq" id="WP_012611047.1">
    <property type="nucleotide sequence ID" value="NC_011768.1"/>
</dbReference>
<dbReference type="SMR" id="B8FET9"/>
<dbReference type="KEGG" id="dal:Dalk_1919"/>
<dbReference type="eggNOG" id="COG0048">
    <property type="taxonomic scope" value="Bacteria"/>
</dbReference>
<dbReference type="HOGENOM" id="CLU_104295_1_2_7"/>
<dbReference type="Proteomes" id="UP000000739">
    <property type="component" value="Chromosome"/>
</dbReference>
<dbReference type="GO" id="GO:0015935">
    <property type="term" value="C:small ribosomal subunit"/>
    <property type="evidence" value="ECO:0007669"/>
    <property type="project" value="InterPro"/>
</dbReference>
<dbReference type="GO" id="GO:0019843">
    <property type="term" value="F:rRNA binding"/>
    <property type="evidence" value="ECO:0007669"/>
    <property type="project" value="UniProtKB-UniRule"/>
</dbReference>
<dbReference type="GO" id="GO:0003735">
    <property type="term" value="F:structural constituent of ribosome"/>
    <property type="evidence" value="ECO:0007669"/>
    <property type="project" value="InterPro"/>
</dbReference>
<dbReference type="GO" id="GO:0000049">
    <property type="term" value="F:tRNA binding"/>
    <property type="evidence" value="ECO:0007669"/>
    <property type="project" value="UniProtKB-UniRule"/>
</dbReference>
<dbReference type="GO" id="GO:0006412">
    <property type="term" value="P:translation"/>
    <property type="evidence" value="ECO:0007669"/>
    <property type="project" value="UniProtKB-UniRule"/>
</dbReference>
<dbReference type="CDD" id="cd03368">
    <property type="entry name" value="Ribosomal_S12"/>
    <property type="match status" value="1"/>
</dbReference>
<dbReference type="FunFam" id="2.40.50.140:FF:000001">
    <property type="entry name" value="30S ribosomal protein S12"/>
    <property type="match status" value="1"/>
</dbReference>
<dbReference type="Gene3D" id="2.40.50.140">
    <property type="entry name" value="Nucleic acid-binding proteins"/>
    <property type="match status" value="1"/>
</dbReference>
<dbReference type="HAMAP" id="MF_00403_B">
    <property type="entry name" value="Ribosomal_uS12_B"/>
    <property type="match status" value="1"/>
</dbReference>
<dbReference type="InterPro" id="IPR012340">
    <property type="entry name" value="NA-bd_OB-fold"/>
</dbReference>
<dbReference type="InterPro" id="IPR006032">
    <property type="entry name" value="Ribosomal_uS12"/>
</dbReference>
<dbReference type="InterPro" id="IPR005679">
    <property type="entry name" value="Ribosomal_uS12_bac"/>
</dbReference>
<dbReference type="NCBIfam" id="TIGR00981">
    <property type="entry name" value="rpsL_bact"/>
    <property type="match status" value="1"/>
</dbReference>
<dbReference type="PANTHER" id="PTHR11652">
    <property type="entry name" value="30S RIBOSOMAL PROTEIN S12 FAMILY MEMBER"/>
    <property type="match status" value="1"/>
</dbReference>
<dbReference type="Pfam" id="PF00164">
    <property type="entry name" value="Ribosom_S12_S23"/>
    <property type="match status" value="1"/>
</dbReference>
<dbReference type="PIRSF" id="PIRSF002133">
    <property type="entry name" value="Ribosomal_S12/S23"/>
    <property type="match status" value="1"/>
</dbReference>
<dbReference type="PRINTS" id="PR01034">
    <property type="entry name" value="RIBOSOMALS12"/>
</dbReference>
<dbReference type="SUPFAM" id="SSF50249">
    <property type="entry name" value="Nucleic acid-binding proteins"/>
    <property type="match status" value="1"/>
</dbReference>
<dbReference type="PROSITE" id="PS00055">
    <property type="entry name" value="RIBOSOMAL_S12"/>
    <property type="match status" value="1"/>
</dbReference>
<sequence length="123" mass="13643">MPTINQLVRHGRKRSVKKTNTPALKASPQKRGVCTRVYTTTPKKPNSALRKVARVRLTTGMEVTAYIPGVGHNLQEHSVVLVRGGRVKDLPGVRYHIVRGTLDSIGVQDRKQGRSHYGAKKPK</sequence>
<gene>
    <name evidence="2" type="primary">rpsL</name>
    <name type="ordered locus">Dalk_1919</name>
</gene>
<accession>B8FET9</accession>